<protein>
    <recommendedName>
        <fullName evidence="1">7-cyano-7-deazaguanine synthase</fullName>
        <ecNumber evidence="1">6.3.4.20</ecNumber>
    </recommendedName>
    <alternativeName>
        <fullName evidence="1">7-cyano-7-carbaguanine synthase</fullName>
    </alternativeName>
    <alternativeName>
        <fullName evidence="1">PreQ(0) synthase</fullName>
    </alternativeName>
    <alternativeName>
        <fullName evidence="1">Queuosine biosynthesis protein QueC</fullName>
    </alternativeName>
</protein>
<name>QUEC_LEPIN</name>
<organism>
    <name type="scientific">Leptospira interrogans serogroup Icterohaemorrhagiae serovar Lai (strain 56601)</name>
    <dbReference type="NCBI Taxonomy" id="189518"/>
    <lineage>
        <taxon>Bacteria</taxon>
        <taxon>Pseudomonadati</taxon>
        <taxon>Spirochaetota</taxon>
        <taxon>Spirochaetia</taxon>
        <taxon>Leptospirales</taxon>
        <taxon>Leptospiraceae</taxon>
        <taxon>Leptospira</taxon>
    </lineage>
</organism>
<proteinExistence type="inferred from homology"/>
<feature type="chain" id="PRO_0000246858" description="7-cyano-7-deazaguanine synthase">
    <location>
        <begin position="1"/>
        <end position="242"/>
    </location>
</feature>
<feature type="region of interest" description="Disordered" evidence="2">
    <location>
        <begin position="1"/>
        <end position="22"/>
    </location>
</feature>
<feature type="binding site" evidence="1">
    <location>
        <begin position="32"/>
        <end position="42"/>
    </location>
    <ligand>
        <name>ATP</name>
        <dbReference type="ChEBI" id="CHEBI:30616"/>
    </ligand>
</feature>
<feature type="binding site" evidence="1">
    <location>
        <position position="212"/>
    </location>
    <ligand>
        <name>Zn(2+)</name>
        <dbReference type="ChEBI" id="CHEBI:29105"/>
    </ligand>
</feature>
<feature type="binding site" evidence="1">
    <location>
        <position position="221"/>
    </location>
    <ligand>
        <name>Zn(2+)</name>
        <dbReference type="ChEBI" id="CHEBI:29105"/>
    </ligand>
</feature>
<feature type="binding site" evidence="1">
    <location>
        <position position="224"/>
    </location>
    <ligand>
        <name>Zn(2+)</name>
        <dbReference type="ChEBI" id="CHEBI:29105"/>
    </ligand>
</feature>
<feature type="binding site" evidence="1">
    <location>
        <position position="227"/>
    </location>
    <ligand>
        <name>Zn(2+)</name>
        <dbReference type="ChEBI" id="CHEBI:29105"/>
    </ligand>
</feature>
<evidence type="ECO:0000255" key="1">
    <source>
        <dbReference type="HAMAP-Rule" id="MF_01633"/>
    </source>
</evidence>
<evidence type="ECO:0000256" key="2">
    <source>
        <dbReference type="SAM" id="MobiDB-lite"/>
    </source>
</evidence>
<accession>Q8F964</accession>
<reference key="1">
    <citation type="journal article" date="2003" name="Nature">
        <title>Unique physiological and pathogenic features of Leptospira interrogans revealed by whole-genome sequencing.</title>
        <authorList>
            <person name="Ren S.-X."/>
            <person name="Fu G."/>
            <person name="Jiang X.-G."/>
            <person name="Zeng R."/>
            <person name="Miao Y.-G."/>
            <person name="Xu H."/>
            <person name="Zhang Y.-X."/>
            <person name="Xiong H."/>
            <person name="Lu G."/>
            <person name="Lu L.-F."/>
            <person name="Jiang H.-Q."/>
            <person name="Jia J."/>
            <person name="Tu Y.-F."/>
            <person name="Jiang J.-X."/>
            <person name="Gu W.-Y."/>
            <person name="Zhang Y.-Q."/>
            <person name="Cai Z."/>
            <person name="Sheng H.-H."/>
            <person name="Yin H.-F."/>
            <person name="Zhang Y."/>
            <person name="Zhu G.-F."/>
            <person name="Wan M."/>
            <person name="Huang H.-L."/>
            <person name="Qian Z."/>
            <person name="Wang S.-Y."/>
            <person name="Ma W."/>
            <person name="Yao Z.-J."/>
            <person name="Shen Y."/>
            <person name="Qiang B.-Q."/>
            <person name="Xia Q.-C."/>
            <person name="Guo X.-K."/>
            <person name="Danchin A."/>
            <person name="Saint Girons I."/>
            <person name="Somerville R.L."/>
            <person name="Wen Y.-M."/>
            <person name="Shi M.-H."/>
            <person name="Chen Z."/>
            <person name="Xu J.-G."/>
            <person name="Zhao G.-P."/>
        </authorList>
    </citation>
    <scope>NUCLEOTIDE SEQUENCE [LARGE SCALE GENOMIC DNA]</scope>
    <source>
        <strain>56601</strain>
    </source>
</reference>
<comment type="function">
    <text evidence="1">Catalyzes the ATP-dependent conversion of 7-carboxy-7-deazaguanine (CDG) to 7-cyano-7-deazaguanine (preQ(0)).</text>
</comment>
<comment type="catalytic activity">
    <reaction evidence="1">
        <text>7-carboxy-7-deazaguanine + NH4(+) + ATP = 7-cyano-7-deazaguanine + ADP + phosphate + H2O + H(+)</text>
        <dbReference type="Rhea" id="RHEA:27982"/>
        <dbReference type="ChEBI" id="CHEBI:15377"/>
        <dbReference type="ChEBI" id="CHEBI:15378"/>
        <dbReference type="ChEBI" id="CHEBI:28938"/>
        <dbReference type="ChEBI" id="CHEBI:30616"/>
        <dbReference type="ChEBI" id="CHEBI:43474"/>
        <dbReference type="ChEBI" id="CHEBI:45075"/>
        <dbReference type="ChEBI" id="CHEBI:61036"/>
        <dbReference type="ChEBI" id="CHEBI:456216"/>
        <dbReference type="EC" id="6.3.4.20"/>
    </reaction>
</comment>
<comment type="cofactor">
    <cofactor evidence="1">
        <name>Zn(2+)</name>
        <dbReference type="ChEBI" id="CHEBI:29105"/>
    </cofactor>
    <text evidence="1">Binds 1 zinc ion per subunit.</text>
</comment>
<comment type="pathway">
    <text evidence="1">Purine metabolism; 7-cyano-7-deazaguanine biosynthesis.</text>
</comment>
<comment type="similarity">
    <text evidence="1">Belongs to the QueC family.</text>
</comment>
<keyword id="KW-0067">ATP-binding</keyword>
<keyword id="KW-0436">Ligase</keyword>
<keyword id="KW-0479">Metal-binding</keyword>
<keyword id="KW-0547">Nucleotide-binding</keyword>
<keyword id="KW-0671">Queuosine biosynthesis</keyword>
<keyword id="KW-1185">Reference proteome</keyword>
<keyword id="KW-0862">Zinc</keyword>
<sequence>MNSSSNEKNKDLNRKNFSSKTDSSNNKAVVLLSGGLDSTTCLYQAIADGKEIQALSFDYGQRHKIELSYAKKVTRKLGIPHTIQKLKPELFLGSSLTQKSLHVPKNSLRKEEIPNTYVPGRNILFLSFAVSLAEGTGSDSIYIGVNSMDYSGYPDCRPEFIKMFEMAIQLGTKKGSQGPSIKILTPLQNLSKKEIVLLGNQLKVPFHLTFSCYDPKNGKACGKCDACLLRKKGFQETGVSEK</sequence>
<gene>
    <name evidence="1" type="primary">queC</name>
    <name type="ordered locus">LA_0333</name>
</gene>
<dbReference type="EC" id="6.3.4.20" evidence="1"/>
<dbReference type="EMBL" id="AE010300">
    <property type="protein sequence ID" value="AAN47532.1"/>
    <property type="molecule type" value="Genomic_DNA"/>
</dbReference>
<dbReference type="RefSeq" id="NP_710514.1">
    <property type="nucleotide sequence ID" value="NC_004342.2"/>
</dbReference>
<dbReference type="RefSeq" id="WP_001088969.1">
    <property type="nucleotide sequence ID" value="NC_004342.2"/>
</dbReference>
<dbReference type="SMR" id="Q8F964"/>
<dbReference type="FunCoup" id="Q8F964">
    <property type="interactions" value="139"/>
</dbReference>
<dbReference type="STRING" id="189518.LA_0333"/>
<dbReference type="PaxDb" id="189518-LA_0333"/>
<dbReference type="EnsemblBacteria" id="AAN47532">
    <property type="protein sequence ID" value="AAN47532"/>
    <property type="gene ID" value="LA_0333"/>
</dbReference>
<dbReference type="GeneID" id="61143642"/>
<dbReference type="KEGG" id="lil:LA_0333"/>
<dbReference type="PATRIC" id="fig|189518.3.peg.336"/>
<dbReference type="HOGENOM" id="CLU_081854_1_0_12"/>
<dbReference type="InParanoid" id="Q8F964"/>
<dbReference type="OrthoDB" id="9789567at2"/>
<dbReference type="UniPathway" id="UPA00391"/>
<dbReference type="Proteomes" id="UP000001408">
    <property type="component" value="Chromosome I"/>
</dbReference>
<dbReference type="GO" id="GO:0005524">
    <property type="term" value="F:ATP binding"/>
    <property type="evidence" value="ECO:0007669"/>
    <property type="project" value="UniProtKB-UniRule"/>
</dbReference>
<dbReference type="GO" id="GO:0016879">
    <property type="term" value="F:ligase activity, forming carbon-nitrogen bonds"/>
    <property type="evidence" value="ECO:0007669"/>
    <property type="project" value="UniProtKB-UniRule"/>
</dbReference>
<dbReference type="GO" id="GO:0008270">
    <property type="term" value="F:zinc ion binding"/>
    <property type="evidence" value="ECO:0007669"/>
    <property type="project" value="UniProtKB-UniRule"/>
</dbReference>
<dbReference type="GO" id="GO:0008616">
    <property type="term" value="P:queuosine biosynthetic process"/>
    <property type="evidence" value="ECO:0007669"/>
    <property type="project" value="UniProtKB-UniRule"/>
</dbReference>
<dbReference type="CDD" id="cd01995">
    <property type="entry name" value="QueC-like"/>
    <property type="match status" value="1"/>
</dbReference>
<dbReference type="FunFam" id="3.40.50.620:FF:000170">
    <property type="entry name" value="7-cyano-7-deazaguanine synthase"/>
    <property type="match status" value="1"/>
</dbReference>
<dbReference type="Gene3D" id="3.40.50.620">
    <property type="entry name" value="HUPs"/>
    <property type="match status" value="1"/>
</dbReference>
<dbReference type="HAMAP" id="MF_01633">
    <property type="entry name" value="QueC"/>
    <property type="match status" value="1"/>
</dbReference>
<dbReference type="InterPro" id="IPR018317">
    <property type="entry name" value="QueC"/>
</dbReference>
<dbReference type="InterPro" id="IPR014729">
    <property type="entry name" value="Rossmann-like_a/b/a_fold"/>
</dbReference>
<dbReference type="NCBIfam" id="TIGR00364">
    <property type="entry name" value="7-cyano-7-deazaguanine synthase QueC"/>
    <property type="match status" value="1"/>
</dbReference>
<dbReference type="PANTHER" id="PTHR42914">
    <property type="entry name" value="7-CYANO-7-DEAZAGUANINE SYNTHASE"/>
    <property type="match status" value="1"/>
</dbReference>
<dbReference type="PANTHER" id="PTHR42914:SF1">
    <property type="entry name" value="7-CYANO-7-DEAZAGUANINE SYNTHASE"/>
    <property type="match status" value="1"/>
</dbReference>
<dbReference type="Pfam" id="PF06508">
    <property type="entry name" value="QueC"/>
    <property type="match status" value="1"/>
</dbReference>
<dbReference type="PIRSF" id="PIRSF006293">
    <property type="entry name" value="ExsB"/>
    <property type="match status" value="1"/>
</dbReference>
<dbReference type="SUPFAM" id="SSF52402">
    <property type="entry name" value="Adenine nucleotide alpha hydrolases-like"/>
    <property type="match status" value="1"/>
</dbReference>